<organism>
    <name type="scientific">Danio rerio</name>
    <name type="common">Zebrafish</name>
    <name type="synonym">Brachydanio rerio</name>
    <dbReference type="NCBI Taxonomy" id="7955"/>
    <lineage>
        <taxon>Eukaryota</taxon>
        <taxon>Metazoa</taxon>
        <taxon>Chordata</taxon>
        <taxon>Craniata</taxon>
        <taxon>Vertebrata</taxon>
        <taxon>Euteleostomi</taxon>
        <taxon>Actinopterygii</taxon>
        <taxon>Neopterygii</taxon>
        <taxon>Teleostei</taxon>
        <taxon>Ostariophysi</taxon>
        <taxon>Cypriniformes</taxon>
        <taxon>Danionidae</taxon>
        <taxon>Danioninae</taxon>
        <taxon>Danio</taxon>
    </lineage>
</organism>
<protein>
    <recommendedName>
        <fullName>Pleckstrin homology domain-containing family F member 2</fullName>
        <shortName>PH domain-containing family F member 2</shortName>
    </recommendedName>
</protein>
<keyword id="KW-0256">Endoplasmic reticulum</keyword>
<keyword id="KW-0967">Endosome</keyword>
<keyword id="KW-0472">Membrane</keyword>
<keyword id="KW-0479">Metal-binding</keyword>
<keyword id="KW-0653">Protein transport</keyword>
<keyword id="KW-1185">Reference proteome</keyword>
<keyword id="KW-0813">Transport</keyword>
<keyword id="KW-0862">Zinc</keyword>
<keyword id="KW-0863">Zinc-finger</keyword>
<gene>
    <name type="primary">plekhf2</name>
    <name type="ORF">zgc:56073</name>
</gene>
<name>PKHF2_DANRE</name>
<feature type="chain" id="PRO_0000251603" description="Pleckstrin homology domain-containing family F member 2">
    <location>
        <begin position="1"/>
        <end position="247"/>
    </location>
</feature>
<feature type="domain" description="PH" evidence="3">
    <location>
        <begin position="35"/>
        <end position="131"/>
    </location>
</feature>
<feature type="zinc finger region" description="FYVE-type" evidence="2">
    <location>
        <begin position="152"/>
        <end position="212"/>
    </location>
</feature>
<feature type="region of interest" description="Disordered" evidence="4">
    <location>
        <begin position="213"/>
        <end position="247"/>
    </location>
</feature>
<feature type="compositionally biased region" description="Polar residues" evidence="4">
    <location>
        <begin position="222"/>
        <end position="236"/>
    </location>
</feature>
<feature type="compositionally biased region" description="Acidic residues" evidence="4">
    <location>
        <begin position="237"/>
        <end position="247"/>
    </location>
</feature>
<feature type="binding site" evidence="2">
    <location>
        <position position="158"/>
    </location>
    <ligand>
        <name>Zn(2+)</name>
        <dbReference type="ChEBI" id="CHEBI:29105"/>
        <label>1</label>
    </ligand>
</feature>
<feature type="binding site" evidence="2">
    <location>
        <position position="161"/>
    </location>
    <ligand>
        <name>Zn(2+)</name>
        <dbReference type="ChEBI" id="CHEBI:29105"/>
        <label>1</label>
    </ligand>
</feature>
<feature type="binding site" evidence="2">
    <location>
        <position position="175"/>
    </location>
    <ligand>
        <name>Zn(2+)</name>
        <dbReference type="ChEBI" id="CHEBI:29105"/>
        <label>2</label>
    </ligand>
</feature>
<feature type="binding site" evidence="2">
    <location>
        <position position="178"/>
    </location>
    <ligand>
        <name>Zn(2+)</name>
        <dbReference type="ChEBI" id="CHEBI:29105"/>
        <label>2</label>
    </ligand>
</feature>
<feature type="binding site" evidence="2">
    <location>
        <position position="183"/>
    </location>
    <ligand>
        <name>Zn(2+)</name>
        <dbReference type="ChEBI" id="CHEBI:29105"/>
        <label>1</label>
    </ligand>
</feature>
<feature type="binding site" evidence="2">
    <location>
        <position position="186"/>
    </location>
    <ligand>
        <name>Zn(2+)</name>
        <dbReference type="ChEBI" id="CHEBI:29105"/>
        <label>1</label>
    </ligand>
</feature>
<feature type="binding site" evidence="2">
    <location>
        <position position="204"/>
    </location>
    <ligand>
        <name>Zn(2+)</name>
        <dbReference type="ChEBI" id="CHEBI:29105"/>
        <label>2</label>
    </ligand>
</feature>
<feature type="binding site" evidence="2">
    <location>
        <position position="207"/>
    </location>
    <ligand>
        <name>Zn(2+)</name>
        <dbReference type="ChEBI" id="CHEBI:29105"/>
        <label>2</label>
    </ligand>
</feature>
<proteinExistence type="evidence at transcript level"/>
<evidence type="ECO:0000250" key="1"/>
<evidence type="ECO:0000255" key="2">
    <source>
        <dbReference type="PROSITE-ProRule" id="PRU00091"/>
    </source>
</evidence>
<evidence type="ECO:0000255" key="3">
    <source>
        <dbReference type="PROSITE-ProRule" id="PRU00145"/>
    </source>
</evidence>
<evidence type="ECO:0000256" key="4">
    <source>
        <dbReference type="SAM" id="MobiDB-lite"/>
    </source>
</evidence>
<sequence length="247" mass="27442">MVDRLANSEANSKRIGVVEACFGTAGQPLAIPGRVLIGEGVLTKLCRKRPKARQFFLFNDILVYGNIVIQKKKYNKQHIIPLESVTIDTVEDEGELRNGWLIKTPTKSFAVYAATATEKSEWMSHINKCVSDLLEKSGKSPTGEHAAVWVPDSEATVCMRCQKMKFTPVNRRHHCRKCGFVVCGPCSEKKFLLPSQSSKPVRVCEFCYKQLSTGATLPPRSDSYSRQGSDFGSNNISDDDDDDDSSD</sequence>
<comment type="function">
    <text evidence="1">May play a role in early endosome fusion upstream of RAB5, hence regulating receptor trafficking and fluid-phase transport. Enhances cellular sensitivity to TNF-induced apoptosis.</text>
</comment>
<comment type="subcellular location">
    <subcellularLocation>
        <location evidence="1">Early endosome membrane</location>
        <topology evidence="1">Peripheral membrane protein</topology>
    </subcellularLocation>
    <subcellularLocation>
        <location evidence="1">Endoplasmic reticulum</location>
    </subcellularLocation>
    <text evidence="1">Colocalizes with EEA1 and RAB5 at endosomal membrane fusion hot spots. May translocate to the endoplasmic reticulum in the early phase of apoptosis.</text>
</comment>
<comment type="domain">
    <text evidence="1">The FYVE domain is important for binding to the endosomal membrane.</text>
</comment>
<accession>Q7ZUV1</accession>
<reference key="1">
    <citation type="submission" date="2003-03" db="EMBL/GenBank/DDBJ databases">
        <authorList>
            <consortium name="NIH - Zebrafish Gene Collection (ZGC) project"/>
        </authorList>
    </citation>
    <scope>NUCLEOTIDE SEQUENCE [LARGE SCALE MRNA]</scope>
    <source>
        <strain>SJD</strain>
    </source>
</reference>
<dbReference type="EMBL" id="BC047820">
    <property type="protein sequence ID" value="AAH47820.1"/>
    <property type="molecule type" value="mRNA"/>
</dbReference>
<dbReference type="RefSeq" id="NP_956538.1">
    <property type="nucleotide sequence ID" value="NM_200244.1"/>
</dbReference>
<dbReference type="RefSeq" id="XP_005158263.1">
    <property type="nucleotide sequence ID" value="XM_005158206.3"/>
</dbReference>
<dbReference type="SMR" id="Q7ZUV1"/>
<dbReference type="FunCoup" id="Q7ZUV1">
    <property type="interactions" value="1087"/>
</dbReference>
<dbReference type="STRING" id="7955.ENSDARP00000038743"/>
<dbReference type="PaxDb" id="7955-ENSDARP00000038743"/>
<dbReference type="Ensembl" id="ENSDART00000032389">
    <property type="protein sequence ID" value="ENSDARP00000038743"/>
    <property type="gene ID" value="ENSDARG00000021141"/>
</dbReference>
<dbReference type="Ensembl" id="ENSDART00000193690">
    <property type="protein sequence ID" value="ENSDARP00000146769"/>
    <property type="gene ID" value="ENSDARG00000021141"/>
</dbReference>
<dbReference type="GeneID" id="393214"/>
<dbReference type="KEGG" id="dre:393214"/>
<dbReference type="AGR" id="ZFIN:ZDB-GENE-040426-884"/>
<dbReference type="CTD" id="79666"/>
<dbReference type="ZFIN" id="ZDB-GENE-040426-884">
    <property type="gene designation" value="plekhf2"/>
</dbReference>
<dbReference type="eggNOG" id="KOG1729">
    <property type="taxonomic scope" value="Eukaryota"/>
</dbReference>
<dbReference type="HOGENOM" id="CLU_064864_1_0_1"/>
<dbReference type="InParanoid" id="Q7ZUV1"/>
<dbReference type="OMA" id="PVRVCEH"/>
<dbReference type="OrthoDB" id="70570at2759"/>
<dbReference type="PhylomeDB" id="Q7ZUV1"/>
<dbReference type="TreeFam" id="TF315235"/>
<dbReference type="PRO" id="PR:Q7ZUV1"/>
<dbReference type="Proteomes" id="UP000000437">
    <property type="component" value="Chromosome 16"/>
</dbReference>
<dbReference type="Bgee" id="ENSDARG00000021141">
    <property type="expression patterns" value="Expressed in zone of skin and 27 other cell types or tissues"/>
</dbReference>
<dbReference type="ExpressionAtlas" id="Q7ZUV1">
    <property type="expression patterns" value="baseline"/>
</dbReference>
<dbReference type="GO" id="GO:0005769">
    <property type="term" value="C:early endosome"/>
    <property type="evidence" value="ECO:0000318"/>
    <property type="project" value="GO_Central"/>
</dbReference>
<dbReference type="GO" id="GO:0031901">
    <property type="term" value="C:early endosome membrane"/>
    <property type="evidence" value="ECO:0007669"/>
    <property type="project" value="UniProtKB-SubCell"/>
</dbReference>
<dbReference type="GO" id="GO:0005783">
    <property type="term" value="C:endoplasmic reticulum"/>
    <property type="evidence" value="ECO:0007669"/>
    <property type="project" value="UniProtKB-SubCell"/>
</dbReference>
<dbReference type="GO" id="GO:0035091">
    <property type="term" value="F:phosphatidylinositol binding"/>
    <property type="evidence" value="ECO:0000318"/>
    <property type="project" value="GO_Central"/>
</dbReference>
<dbReference type="GO" id="GO:0008270">
    <property type="term" value="F:zinc ion binding"/>
    <property type="evidence" value="ECO:0007669"/>
    <property type="project" value="UniProtKB-KW"/>
</dbReference>
<dbReference type="GO" id="GO:0007032">
    <property type="term" value="P:endosome organization"/>
    <property type="evidence" value="ECO:0000318"/>
    <property type="project" value="GO_Central"/>
</dbReference>
<dbReference type="GO" id="GO:0008333">
    <property type="term" value="P:endosome to lysosome transport"/>
    <property type="evidence" value="ECO:0000318"/>
    <property type="project" value="GO_Central"/>
</dbReference>
<dbReference type="GO" id="GO:0015031">
    <property type="term" value="P:protein transport"/>
    <property type="evidence" value="ECO:0007669"/>
    <property type="project" value="UniProtKB-KW"/>
</dbReference>
<dbReference type="CDD" id="cd15755">
    <property type="entry name" value="FYVE_PKHF2"/>
    <property type="match status" value="1"/>
</dbReference>
<dbReference type="CDD" id="cd01218">
    <property type="entry name" value="PH_Phafin2-like"/>
    <property type="match status" value="1"/>
</dbReference>
<dbReference type="FunFam" id="2.30.29.30:FF:000167">
    <property type="entry name" value="Pleckstrin homology domain-containing family F member 2"/>
    <property type="match status" value="1"/>
</dbReference>
<dbReference type="FunFam" id="3.30.40.10:FF:000212">
    <property type="entry name" value="pleckstrin homology domain-containing family F member 2"/>
    <property type="match status" value="1"/>
</dbReference>
<dbReference type="Gene3D" id="2.30.29.30">
    <property type="entry name" value="Pleckstrin-homology domain (PH domain)/Phosphotyrosine-binding domain (PTB)"/>
    <property type="match status" value="1"/>
</dbReference>
<dbReference type="Gene3D" id="3.30.40.10">
    <property type="entry name" value="Zinc/RING finger domain, C3HC4 (zinc finger)"/>
    <property type="match status" value="1"/>
</dbReference>
<dbReference type="InterPro" id="IPR011993">
    <property type="entry name" value="PH-like_dom_sf"/>
</dbReference>
<dbReference type="InterPro" id="IPR001849">
    <property type="entry name" value="PH_domain"/>
</dbReference>
<dbReference type="InterPro" id="IPR051765">
    <property type="entry name" value="PH_domain-containing_F"/>
</dbReference>
<dbReference type="InterPro" id="IPR037871">
    <property type="entry name" value="PH_Phafin"/>
</dbReference>
<dbReference type="InterPro" id="IPR047966">
    <property type="entry name" value="PLEKHF2_FYVE"/>
</dbReference>
<dbReference type="InterPro" id="IPR000306">
    <property type="entry name" value="Znf_FYVE"/>
</dbReference>
<dbReference type="InterPro" id="IPR017455">
    <property type="entry name" value="Znf_FYVE-rel"/>
</dbReference>
<dbReference type="InterPro" id="IPR011011">
    <property type="entry name" value="Znf_FYVE_PHD"/>
</dbReference>
<dbReference type="InterPro" id="IPR013083">
    <property type="entry name" value="Znf_RING/FYVE/PHD"/>
</dbReference>
<dbReference type="PANTHER" id="PTHR46280:SF1">
    <property type="entry name" value="PLECKSTRIN HOMOLOGY DOMAIN-CONTAINING FAMILY F MEMBER 2"/>
    <property type="match status" value="1"/>
</dbReference>
<dbReference type="PANTHER" id="PTHR46280">
    <property type="entry name" value="PLECKSTRIN HOMOLOGY DOMAIN-CONTAINING FAMILY F MEMBER 2-RELATED"/>
    <property type="match status" value="1"/>
</dbReference>
<dbReference type="Pfam" id="PF01363">
    <property type="entry name" value="FYVE"/>
    <property type="match status" value="1"/>
</dbReference>
<dbReference type="Pfam" id="PF00169">
    <property type="entry name" value="PH"/>
    <property type="match status" value="1"/>
</dbReference>
<dbReference type="SMART" id="SM00064">
    <property type="entry name" value="FYVE"/>
    <property type="match status" value="1"/>
</dbReference>
<dbReference type="SMART" id="SM00233">
    <property type="entry name" value="PH"/>
    <property type="match status" value="1"/>
</dbReference>
<dbReference type="SUPFAM" id="SSF57903">
    <property type="entry name" value="FYVE/PHD zinc finger"/>
    <property type="match status" value="1"/>
</dbReference>
<dbReference type="SUPFAM" id="SSF50729">
    <property type="entry name" value="PH domain-like"/>
    <property type="match status" value="1"/>
</dbReference>
<dbReference type="PROSITE" id="PS50003">
    <property type="entry name" value="PH_DOMAIN"/>
    <property type="match status" value="1"/>
</dbReference>
<dbReference type="PROSITE" id="PS50178">
    <property type="entry name" value="ZF_FYVE"/>
    <property type="match status" value="1"/>
</dbReference>